<evidence type="ECO:0000255" key="1">
    <source>
        <dbReference type="HAMAP-Rule" id="MF_01626"/>
    </source>
</evidence>
<keyword id="KW-0143">Chaperone</keyword>
<keyword id="KW-0963">Cytoplasm</keyword>
<keyword id="KW-1185">Reference proteome</keyword>
<feature type="chain" id="PRO_0000196585" description="Regulatory protein ViaA">
    <location>
        <begin position="1"/>
        <end position="483"/>
    </location>
</feature>
<reference key="1">
    <citation type="journal article" date="2002" name="Proc. Natl. Acad. Sci. U.S.A.">
        <title>Extensive mosaic structure revealed by the complete genome sequence of uropathogenic Escherichia coli.</title>
        <authorList>
            <person name="Welch R.A."/>
            <person name="Burland V."/>
            <person name="Plunkett G. III"/>
            <person name="Redford P."/>
            <person name="Roesch P."/>
            <person name="Rasko D."/>
            <person name="Buckles E.L."/>
            <person name="Liou S.-R."/>
            <person name="Boutin A."/>
            <person name="Hackett J."/>
            <person name="Stroud D."/>
            <person name="Mayhew G.F."/>
            <person name="Rose D.J."/>
            <person name="Zhou S."/>
            <person name="Schwartz D.C."/>
            <person name="Perna N.T."/>
            <person name="Mobley H.L.T."/>
            <person name="Donnenberg M.S."/>
            <person name="Blattner F.R."/>
        </authorList>
    </citation>
    <scope>NUCLEOTIDE SEQUENCE [LARGE SCALE GENOMIC DNA]</scope>
    <source>
        <strain>CFT073 / ATCC 700928 / UPEC</strain>
    </source>
</reference>
<accession>Q8FBS6</accession>
<protein>
    <recommendedName>
        <fullName evidence="1">Regulatory protein ViaA</fullName>
    </recommendedName>
    <alternativeName>
        <fullName evidence="1">VWA interacting with AAA+ ATPase</fullName>
    </alternativeName>
</protein>
<dbReference type="EMBL" id="AE014075">
    <property type="protein sequence ID" value="AAN83105.1"/>
    <property type="molecule type" value="Genomic_DNA"/>
</dbReference>
<dbReference type="RefSeq" id="WP_000956636.1">
    <property type="nucleotide sequence ID" value="NZ_CP051263.1"/>
</dbReference>
<dbReference type="SMR" id="Q8FBS6"/>
<dbReference type="STRING" id="199310.c4673"/>
<dbReference type="KEGG" id="ecc:c4673"/>
<dbReference type="eggNOG" id="COG2425">
    <property type="taxonomic scope" value="Bacteria"/>
</dbReference>
<dbReference type="HOGENOM" id="CLU_022130_0_0_6"/>
<dbReference type="BioCyc" id="ECOL199310:C4673-MONOMER"/>
<dbReference type="Proteomes" id="UP000001410">
    <property type="component" value="Chromosome"/>
</dbReference>
<dbReference type="GO" id="GO:0005829">
    <property type="term" value="C:cytosol"/>
    <property type="evidence" value="ECO:0007669"/>
    <property type="project" value="TreeGrafter"/>
</dbReference>
<dbReference type="CDD" id="cd01462">
    <property type="entry name" value="VWA_YIEM_type"/>
    <property type="match status" value="1"/>
</dbReference>
<dbReference type="Gene3D" id="3.40.50.410">
    <property type="entry name" value="von Willebrand factor, type A domain"/>
    <property type="match status" value="1"/>
</dbReference>
<dbReference type="HAMAP" id="MF_01626">
    <property type="entry name" value="ViaA"/>
    <property type="match status" value="1"/>
</dbReference>
<dbReference type="InterPro" id="IPR008912">
    <property type="entry name" value="Uncharacterised_CoxE"/>
</dbReference>
<dbReference type="InterPro" id="IPR023481">
    <property type="entry name" value="Uncharacterised_ViaA"/>
</dbReference>
<dbReference type="InterPro" id="IPR002035">
    <property type="entry name" value="VWF_A"/>
</dbReference>
<dbReference type="InterPro" id="IPR036465">
    <property type="entry name" value="vWFA_dom_sf"/>
</dbReference>
<dbReference type="NCBIfam" id="NF008230">
    <property type="entry name" value="PRK10997.1"/>
    <property type="match status" value="1"/>
</dbReference>
<dbReference type="PANTHER" id="PTHR36846">
    <property type="entry name" value="PROTEIN VIAA"/>
    <property type="match status" value="1"/>
</dbReference>
<dbReference type="PANTHER" id="PTHR36846:SF1">
    <property type="entry name" value="PROTEIN VIAA"/>
    <property type="match status" value="1"/>
</dbReference>
<dbReference type="Pfam" id="PF05762">
    <property type="entry name" value="VWA_CoxE"/>
    <property type="match status" value="1"/>
</dbReference>
<dbReference type="SMART" id="SM00327">
    <property type="entry name" value="VWA"/>
    <property type="match status" value="1"/>
</dbReference>
<dbReference type="SUPFAM" id="SSF53300">
    <property type="entry name" value="vWA-like"/>
    <property type="match status" value="1"/>
</dbReference>
<sequence>MLTLDTLNVMLAVSEEGLIEEMIIALLASPQLAVFFEKFPRLKAAITDDVPRWREALRSRLKDARVPPELTEEVMCYQQSQLLSTPQFIVQLPQILDLLHRLNSPWAEQARQLVDANSTITSALHTLFLQRWRLSLIVQATTLNQQLLEEEREQLLSEVQERMTLSGQLEPILADNNTAAGRLWDMSAGQLKRGDYQLIVKYGEFLNEQPELKRLAEQLGRSREAKSIPRNDAQMETFRTMVREPATVPEQVDGLQQSDDILRLLPPELATLGITELEYEFYRRLVEKQLLTYRLHGESWREKMIERPVVHKDYDEQPRGPFIVCVDTSGSMGGFNEQCAKAFCLALMRIALAENRRCYIMLFSTEIVRYELSGPQGIEQAIRFLSQQFRGGTDLASCFRAIMERLQSREWFDADAVVISDFIAQRLPDDVTSKVKELQRVHQHRFHAVAMSAHGKPGIMRIFDHIWRFDTGMRSRLLRRWRR</sequence>
<proteinExistence type="inferred from homology"/>
<comment type="function">
    <text evidence="1">Component of the RavA-ViaA chaperone complex, which may act on the membrane to optimize the function of some of the respiratory chains. ViaA stimulates the ATPase activity of RavA.</text>
</comment>
<comment type="subunit">
    <text evidence="1">Homodimer. Interacts with RavA.</text>
</comment>
<comment type="subcellular location">
    <subcellularLocation>
        <location evidence="1">Cytoplasm</location>
    </subcellularLocation>
</comment>
<comment type="similarity">
    <text evidence="1">Belongs to the ViaA family.</text>
</comment>
<organism>
    <name type="scientific">Escherichia coli O6:H1 (strain CFT073 / ATCC 700928 / UPEC)</name>
    <dbReference type="NCBI Taxonomy" id="199310"/>
    <lineage>
        <taxon>Bacteria</taxon>
        <taxon>Pseudomonadati</taxon>
        <taxon>Pseudomonadota</taxon>
        <taxon>Gammaproteobacteria</taxon>
        <taxon>Enterobacterales</taxon>
        <taxon>Enterobacteriaceae</taxon>
        <taxon>Escherichia</taxon>
    </lineage>
</organism>
<name>VIAA_ECOL6</name>
<gene>
    <name evidence="1" type="primary">viaA</name>
    <name type="ordered locus">c4673</name>
</gene>